<accession>Q2RNL4</accession>
<dbReference type="EC" id="6.1.1.3" evidence="1"/>
<dbReference type="EMBL" id="CP000230">
    <property type="protein sequence ID" value="ABC24281.1"/>
    <property type="molecule type" value="Genomic_DNA"/>
</dbReference>
<dbReference type="RefSeq" id="WP_011391234.1">
    <property type="nucleotide sequence ID" value="NC_007643.1"/>
</dbReference>
<dbReference type="RefSeq" id="YP_428568.1">
    <property type="nucleotide sequence ID" value="NC_007643.1"/>
</dbReference>
<dbReference type="SMR" id="Q2RNL4"/>
<dbReference type="STRING" id="269796.Rru_A3487"/>
<dbReference type="EnsemblBacteria" id="ABC24281">
    <property type="protein sequence ID" value="ABC24281"/>
    <property type="gene ID" value="Rru_A3487"/>
</dbReference>
<dbReference type="KEGG" id="rru:Rru_A3487"/>
<dbReference type="PATRIC" id="fig|269796.9.peg.3604"/>
<dbReference type="eggNOG" id="COG0441">
    <property type="taxonomic scope" value="Bacteria"/>
</dbReference>
<dbReference type="HOGENOM" id="CLU_008554_0_1_5"/>
<dbReference type="PhylomeDB" id="Q2RNL4"/>
<dbReference type="Proteomes" id="UP000001929">
    <property type="component" value="Chromosome"/>
</dbReference>
<dbReference type="GO" id="GO:0005737">
    <property type="term" value="C:cytoplasm"/>
    <property type="evidence" value="ECO:0007669"/>
    <property type="project" value="UniProtKB-SubCell"/>
</dbReference>
<dbReference type="GO" id="GO:0005524">
    <property type="term" value="F:ATP binding"/>
    <property type="evidence" value="ECO:0007669"/>
    <property type="project" value="UniProtKB-UniRule"/>
</dbReference>
<dbReference type="GO" id="GO:0046872">
    <property type="term" value="F:metal ion binding"/>
    <property type="evidence" value="ECO:0007669"/>
    <property type="project" value="UniProtKB-KW"/>
</dbReference>
<dbReference type="GO" id="GO:0004829">
    <property type="term" value="F:threonine-tRNA ligase activity"/>
    <property type="evidence" value="ECO:0007669"/>
    <property type="project" value="UniProtKB-UniRule"/>
</dbReference>
<dbReference type="GO" id="GO:0000049">
    <property type="term" value="F:tRNA binding"/>
    <property type="evidence" value="ECO:0007669"/>
    <property type="project" value="UniProtKB-KW"/>
</dbReference>
<dbReference type="GO" id="GO:0006435">
    <property type="term" value="P:threonyl-tRNA aminoacylation"/>
    <property type="evidence" value="ECO:0007669"/>
    <property type="project" value="UniProtKB-UniRule"/>
</dbReference>
<dbReference type="CDD" id="cd01667">
    <property type="entry name" value="TGS_ThrRS"/>
    <property type="match status" value="1"/>
</dbReference>
<dbReference type="CDD" id="cd00860">
    <property type="entry name" value="ThrRS_anticodon"/>
    <property type="match status" value="1"/>
</dbReference>
<dbReference type="CDD" id="cd00771">
    <property type="entry name" value="ThrRS_core"/>
    <property type="match status" value="1"/>
</dbReference>
<dbReference type="FunFam" id="3.10.20.30:FF:000005">
    <property type="entry name" value="Threonine--tRNA ligase"/>
    <property type="match status" value="1"/>
</dbReference>
<dbReference type="FunFam" id="3.30.54.20:FF:000002">
    <property type="entry name" value="Threonine--tRNA ligase"/>
    <property type="match status" value="1"/>
</dbReference>
<dbReference type="FunFam" id="3.30.930.10:FF:000002">
    <property type="entry name" value="Threonine--tRNA ligase"/>
    <property type="match status" value="1"/>
</dbReference>
<dbReference type="FunFam" id="3.40.50.800:FF:000001">
    <property type="entry name" value="Threonine--tRNA ligase"/>
    <property type="match status" value="1"/>
</dbReference>
<dbReference type="FunFam" id="3.30.980.10:FF:000005">
    <property type="entry name" value="Threonyl-tRNA synthetase, mitochondrial"/>
    <property type="match status" value="1"/>
</dbReference>
<dbReference type="Gene3D" id="3.10.20.30">
    <property type="match status" value="1"/>
</dbReference>
<dbReference type="Gene3D" id="3.30.54.20">
    <property type="match status" value="1"/>
</dbReference>
<dbReference type="Gene3D" id="3.40.50.800">
    <property type="entry name" value="Anticodon-binding domain"/>
    <property type="match status" value="1"/>
</dbReference>
<dbReference type="Gene3D" id="3.30.930.10">
    <property type="entry name" value="Bira Bifunctional Protein, Domain 2"/>
    <property type="match status" value="1"/>
</dbReference>
<dbReference type="Gene3D" id="3.30.980.10">
    <property type="entry name" value="Threonyl-trna Synthetase, Chain A, domain 2"/>
    <property type="match status" value="1"/>
</dbReference>
<dbReference type="HAMAP" id="MF_00184">
    <property type="entry name" value="Thr_tRNA_synth"/>
    <property type="match status" value="1"/>
</dbReference>
<dbReference type="InterPro" id="IPR002314">
    <property type="entry name" value="aa-tRNA-synt_IIb"/>
</dbReference>
<dbReference type="InterPro" id="IPR006195">
    <property type="entry name" value="aa-tRNA-synth_II"/>
</dbReference>
<dbReference type="InterPro" id="IPR045864">
    <property type="entry name" value="aa-tRNA-synth_II/BPL/LPL"/>
</dbReference>
<dbReference type="InterPro" id="IPR004154">
    <property type="entry name" value="Anticodon-bd"/>
</dbReference>
<dbReference type="InterPro" id="IPR036621">
    <property type="entry name" value="Anticodon-bd_dom_sf"/>
</dbReference>
<dbReference type="InterPro" id="IPR012675">
    <property type="entry name" value="Beta-grasp_dom_sf"/>
</dbReference>
<dbReference type="InterPro" id="IPR004095">
    <property type="entry name" value="TGS"/>
</dbReference>
<dbReference type="InterPro" id="IPR012676">
    <property type="entry name" value="TGS-like"/>
</dbReference>
<dbReference type="InterPro" id="IPR002320">
    <property type="entry name" value="Thr-tRNA-ligase_IIa"/>
</dbReference>
<dbReference type="InterPro" id="IPR018163">
    <property type="entry name" value="Thr/Ala-tRNA-synth_IIc_edit"/>
</dbReference>
<dbReference type="InterPro" id="IPR047246">
    <property type="entry name" value="ThrRS_anticodon"/>
</dbReference>
<dbReference type="InterPro" id="IPR033728">
    <property type="entry name" value="ThrRS_core"/>
</dbReference>
<dbReference type="InterPro" id="IPR012947">
    <property type="entry name" value="tRNA_SAD"/>
</dbReference>
<dbReference type="NCBIfam" id="TIGR00418">
    <property type="entry name" value="thrS"/>
    <property type="match status" value="1"/>
</dbReference>
<dbReference type="PANTHER" id="PTHR11451:SF44">
    <property type="entry name" value="THREONINE--TRNA LIGASE, CHLOROPLASTIC_MITOCHONDRIAL 2"/>
    <property type="match status" value="1"/>
</dbReference>
<dbReference type="PANTHER" id="PTHR11451">
    <property type="entry name" value="THREONINE-TRNA LIGASE"/>
    <property type="match status" value="1"/>
</dbReference>
<dbReference type="Pfam" id="PF03129">
    <property type="entry name" value="HGTP_anticodon"/>
    <property type="match status" value="1"/>
</dbReference>
<dbReference type="Pfam" id="PF02824">
    <property type="entry name" value="TGS"/>
    <property type="match status" value="1"/>
</dbReference>
<dbReference type="Pfam" id="PF00587">
    <property type="entry name" value="tRNA-synt_2b"/>
    <property type="match status" value="1"/>
</dbReference>
<dbReference type="Pfam" id="PF07973">
    <property type="entry name" value="tRNA_SAD"/>
    <property type="match status" value="1"/>
</dbReference>
<dbReference type="PRINTS" id="PR01047">
    <property type="entry name" value="TRNASYNTHTHR"/>
</dbReference>
<dbReference type="SMART" id="SM00863">
    <property type="entry name" value="tRNA_SAD"/>
    <property type="match status" value="1"/>
</dbReference>
<dbReference type="SUPFAM" id="SSF52954">
    <property type="entry name" value="Class II aaRS ABD-related"/>
    <property type="match status" value="1"/>
</dbReference>
<dbReference type="SUPFAM" id="SSF55681">
    <property type="entry name" value="Class II aaRS and biotin synthetases"/>
    <property type="match status" value="1"/>
</dbReference>
<dbReference type="SUPFAM" id="SSF81271">
    <property type="entry name" value="TGS-like"/>
    <property type="match status" value="1"/>
</dbReference>
<dbReference type="SUPFAM" id="SSF55186">
    <property type="entry name" value="ThrRS/AlaRS common domain"/>
    <property type="match status" value="1"/>
</dbReference>
<dbReference type="PROSITE" id="PS50862">
    <property type="entry name" value="AA_TRNA_LIGASE_II"/>
    <property type="match status" value="1"/>
</dbReference>
<dbReference type="PROSITE" id="PS51880">
    <property type="entry name" value="TGS"/>
    <property type="match status" value="1"/>
</dbReference>
<gene>
    <name evidence="1" type="primary">thrS</name>
    <name type="ordered locus">Rru_A3487</name>
</gene>
<name>SYT_RHORT</name>
<comment type="function">
    <text evidence="1">Catalyzes the attachment of threonine to tRNA(Thr) in a two-step reaction: L-threonine is first activated by ATP to form Thr-AMP and then transferred to the acceptor end of tRNA(Thr). Also edits incorrectly charged L-seryl-tRNA(Thr).</text>
</comment>
<comment type="catalytic activity">
    <reaction evidence="1">
        <text>tRNA(Thr) + L-threonine + ATP = L-threonyl-tRNA(Thr) + AMP + diphosphate + H(+)</text>
        <dbReference type="Rhea" id="RHEA:24624"/>
        <dbReference type="Rhea" id="RHEA-COMP:9670"/>
        <dbReference type="Rhea" id="RHEA-COMP:9704"/>
        <dbReference type="ChEBI" id="CHEBI:15378"/>
        <dbReference type="ChEBI" id="CHEBI:30616"/>
        <dbReference type="ChEBI" id="CHEBI:33019"/>
        <dbReference type="ChEBI" id="CHEBI:57926"/>
        <dbReference type="ChEBI" id="CHEBI:78442"/>
        <dbReference type="ChEBI" id="CHEBI:78534"/>
        <dbReference type="ChEBI" id="CHEBI:456215"/>
        <dbReference type="EC" id="6.1.1.3"/>
    </reaction>
</comment>
<comment type="cofactor">
    <cofactor evidence="1">
        <name>Zn(2+)</name>
        <dbReference type="ChEBI" id="CHEBI:29105"/>
    </cofactor>
    <text evidence="1">Binds 1 zinc ion per subunit.</text>
</comment>
<comment type="subunit">
    <text evidence="1">Homodimer.</text>
</comment>
<comment type="subcellular location">
    <subcellularLocation>
        <location evidence="1">Cytoplasm</location>
    </subcellularLocation>
</comment>
<comment type="similarity">
    <text evidence="1">Belongs to the class-II aminoacyl-tRNA synthetase family.</text>
</comment>
<feature type="chain" id="PRO_1000020488" description="Threonine--tRNA ligase">
    <location>
        <begin position="1"/>
        <end position="643"/>
    </location>
</feature>
<feature type="domain" description="TGS" evidence="2">
    <location>
        <begin position="1"/>
        <end position="61"/>
    </location>
</feature>
<feature type="region of interest" description="Catalytic" evidence="1">
    <location>
        <begin position="243"/>
        <end position="534"/>
    </location>
</feature>
<feature type="binding site" evidence="1">
    <location>
        <position position="334"/>
    </location>
    <ligand>
        <name>Zn(2+)</name>
        <dbReference type="ChEBI" id="CHEBI:29105"/>
    </ligand>
</feature>
<feature type="binding site" evidence="1">
    <location>
        <position position="385"/>
    </location>
    <ligand>
        <name>Zn(2+)</name>
        <dbReference type="ChEBI" id="CHEBI:29105"/>
    </ligand>
</feature>
<feature type="binding site" evidence="1">
    <location>
        <position position="511"/>
    </location>
    <ligand>
        <name>Zn(2+)</name>
        <dbReference type="ChEBI" id="CHEBI:29105"/>
    </ligand>
</feature>
<organism>
    <name type="scientific">Rhodospirillum rubrum (strain ATCC 11170 / ATH 1.1.1 / DSM 467 / LMG 4362 / NCIMB 8255 / S1)</name>
    <dbReference type="NCBI Taxonomy" id="269796"/>
    <lineage>
        <taxon>Bacteria</taxon>
        <taxon>Pseudomonadati</taxon>
        <taxon>Pseudomonadota</taxon>
        <taxon>Alphaproteobacteria</taxon>
        <taxon>Rhodospirillales</taxon>
        <taxon>Rhodospirillaceae</taxon>
        <taxon>Rhodospirillum</taxon>
    </lineage>
</organism>
<protein>
    <recommendedName>
        <fullName evidence="1">Threonine--tRNA ligase</fullName>
        <ecNumber evidence="1">6.1.1.3</ecNumber>
    </recommendedName>
    <alternativeName>
        <fullName evidence="1">Threonyl-tRNA synthetase</fullName>
        <shortName evidence="1">ThrRS</shortName>
    </alternativeName>
</protein>
<keyword id="KW-0030">Aminoacyl-tRNA synthetase</keyword>
<keyword id="KW-0067">ATP-binding</keyword>
<keyword id="KW-0963">Cytoplasm</keyword>
<keyword id="KW-0436">Ligase</keyword>
<keyword id="KW-0479">Metal-binding</keyword>
<keyword id="KW-0547">Nucleotide-binding</keyword>
<keyword id="KW-0648">Protein biosynthesis</keyword>
<keyword id="KW-1185">Reference proteome</keyword>
<keyword id="KW-0694">RNA-binding</keyword>
<keyword id="KW-0820">tRNA-binding</keyword>
<keyword id="KW-0862">Zinc</keyword>
<proteinExistence type="inferred from homology"/>
<reference key="1">
    <citation type="journal article" date="2011" name="Stand. Genomic Sci.">
        <title>Complete genome sequence of Rhodospirillum rubrum type strain (S1).</title>
        <authorList>
            <person name="Munk A.C."/>
            <person name="Copeland A."/>
            <person name="Lucas S."/>
            <person name="Lapidus A."/>
            <person name="Del Rio T.G."/>
            <person name="Barry K."/>
            <person name="Detter J.C."/>
            <person name="Hammon N."/>
            <person name="Israni S."/>
            <person name="Pitluck S."/>
            <person name="Brettin T."/>
            <person name="Bruce D."/>
            <person name="Han C."/>
            <person name="Tapia R."/>
            <person name="Gilna P."/>
            <person name="Schmutz J."/>
            <person name="Larimer F."/>
            <person name="Land M."/>
            <person name="Kyrpides N.C."/>
            <person name="Mavromatis K."/>
            <person name="Richardson P."/>
            <person name="Rohde M."/>
            <person name="Goeker M."/>
            <person name="Klenk H.P."/>
            <person name="Zhang Y."/>
            <person name="Roberts G.P."/>
            <person name="Reslewic S."/>
            <person name="Schwartz D.C."/>
        </authorList>
    </citation>
    <scope>NUCLEOTIDE SEQUENCE [LARGE SCALE GENOMIC DNA]</scope>
    <source>
        <strain>ATCC 11170 / ATH 1.1.1 / DSM 467 / LMG 4362 / NCIMB 8255 / S1</strain>
    </source>
</reference>
<evidence type="ECO:0000255" key="1">
    <source>
        <dbReference type="HAMAP-Rule" id="MF_00184"/>
    </source>
</evidence>
<evidence type="ECO:0000255" key="2">
    <source>
        <dbReference type="PROSITE-ProRule" id="PRU01228"/>
    </source>
</evidence>
<sequence>MVAISLPDGSVRSYEGPVTGRQIAEDIGPGLAKAALAVTIDGTMKDLSVPITTDASVSLITARDAAALELLRHDAAHVMAQAVQELYPGTQVTIGPAIENGFYYDFARAEPFTPEDLERIEERMREIVGRDLPIVREVWERDEAIAYFTKLGETYKAELITGLPANEDVSVYRQGDWLDLCRGPHLPSTGKLGTAFKLMKLAGAYWRGDSRNPMLQRIYGTAWPDRKQLDAYLTMLAEAEKRDHRRVGQEMDLFHLQEEAQGAVFWHPKGWTVYRTLQNYMRRRLDLAGYVEVNTPMLVDRALWEKSGHWEKFRQNMFISEAEDKLLAMKPMNCPCHIQIFKQGIKSYRDLPLRMAEFGACHRNEASGALHGLMRVRAFVQDDAHIFCTEDQIVSETQAFCDLLKSVYRDLGFTEIKVKFSDRPEVRAGSDETWDKAEAALREATDAAGLEWTLNPGEGAFYGPKLEFVLRDAIGRDWQCGTLQVDFVLPERLGADYVGEDGDKHRPVMLHRAILGTFERFMGILIENCAGRFPFWLAPVQVVVATITSDADDYARTVLAALKAKGLRAVADLRNEKINYKVREHSLAKVPVMLVVGRKEAETGGVALRRLGGQSQEVLALDEAIATLANESVAPDLRAAPQG</sequence>